<proteinExistence type="inferred from homology"/>
<sequence>MLILNGFSSATLALITPPFLPKGGKALSQSGPDGLASITLPLPISAERGFAPALALHYSSGGGNGPFGVGWSCATMSIARRTSHGVPQYNDSDEFLGPDGEVLVQTLSTGDAPNPVTCFAYGDVSFPQSYTVTRYQPRTESSFYRLEYWVGNSNGDDFWLLHDSNGILHLLGKTAAARLSDPQAASHTAQWLVEESVTPAGEHIYYSYLAENGDNVDLNGNEAGRDRSAMRYLSKVQYGNATPAADLYLWTSATPAVQWLFTLVFDYGERGVDPQVPPAFTAQNSWLARQDPFSLYNYGFEIRLHRLCRQVLMFHHFPDELGEADTLVSRLLLEYDENPILTQLCAARTLAYEGDGYRRAPVNNMMPPPPPPPMMGGNSSRPKSKWAIVEESKQIQALRYYSAQGYSVINKYLRGDDYPETQAKETLLSRDYLSTNEPSDEEFKNAMSVYINDIAEGLSSLPETDHRVVYRGLKLDKPALSDVLKEYTTIGNIIIDKAFMSTSPDKAWINDTILNIYLEKGHKGRILGDVAHFKGEAEMLFPPNTKLKIESIVNCGSQDFASQLSKLRLSDDATADTNRIKRIINMRVLNS</sequence>
<keyword id="KW-0328">Glycosyltransferase</keyword>
<keyword id="KW-0520">NAD</keyword>
<keyword id="KW-0521">NADP</keyword>
<keyword id="KW-0547">Nucleotide-binding</keyword>
<keyword id="KW-0548">Nucleotidyltransferase</keyword>
<keyword id="KW-0614">Plasmid</keyword>
<keyword id="KW-0964">Secreted</keyword>
<keyword id="KW-0800">Toxin</keyword>
<keyword id="KW-0808">Transferase</keyword>
<keyword id="KW-0843">Virulence</keyword>
<protein>
    <recommendedName>
        <fullName>Mono(ADP-ribosyl)transferase SpvB</fullName>
        <shortName>mADPRT</shortName>
        <shortName>mART</shortName>
        <ecNumber>2.4.2.31</ecNumber>
    </recommendedName>
    <alternativeName>
        <fullName>NAD(+)--arginine ADP-ribosyltransferase</fullName>
    </alternativeName>
    <alternativeName>
        <fullName>Toxin SpvB</fullName>
    </alternativeName>
</protein>
<comment type="function">
    <text evidence="1">Mono-ADP-ribosylates eukaryotic muscle and non-muscle actin on 'Arg-177'. ADP-ribosylation prevents the polymerization of G-actin to F-actin, causing actin filament depolymerization, destruction of the cytoskeleton and cytotoxicity. Does not possess NAD(+)-glycohydrolase activity, unlike most mART enzymes (By similarity).</text>
</comment>
<comment type="catalytic activity">
    <reaction>
        <text>L-arginyl-[protein] + NAD(+) = N(omega)-(ADP-D-ribosyl)-L-arginyl-[protein] + nicotinamide + H(+)</text>
        <dbReference type="Rhea" id="RHEA:19149"/>
        <dbReference type="Rhea" id="RHEA-COMP:10532"/>
        <dbReference type="Rhea" id="RHEA-COMP:15087"/>
        <dbReference type="ChEBI" id="CHEBI:15378"/>
        <dbReference type="ChEBI" id="CHEBI:17154"/>
        <dbReference type="ChEBI" id="CHEBI:29965"/>
        <dbReference type="ChEBI" id="CHEBI:57540"/>
        <dbReference type="ChEBI" id="CHEBI:142554"/>
        <dbReference type="EC" id="2.4.2.31"/>
    </reaction>
</comment>
<comment type="subcellular location">
    <subcellularLocation>
        <location evidence="3">Secreted</location>
    </subcellularLocation>
    <text>Secreted via the type III secretion system 2 (SPI-2 T3SS).</text>
</comment>
<comment type="miscellaneous">
    <text>In Salmonella spp. the spv gene cluster is encoded on a highly transmissible plasmid.</text>
</comment>
<comment type="similarity">
    <text evidence="4">Belongs to the SpvB family.</text>
</comment>
<geneLocation type="plasmid">
    <name>unnamed</name>
</geneLocation>
<organism>
    <name type="scientific">Salmonella typhimurium (strain 14028s / SGSC 2262)</name>
    <dbReference type="NCBI Taxonomy" id="588858"/>
    <lineage>
        <taxon>Bacteria</taxon>
        <taxon>Pseudomonadati</taxon>
        <taxon>Pseudomonadota</taxon>
        <taxon>Gammaproteobacteria</taxon>
        <taxon>Enterobacterales</taxon>
        <taxon>Enterobacteriaceae</taxon>
        <taxon>Salmonella</taxon>
    </lineage>
</organism>
<name>SPVB_SALT1</name>
<feature type="chain" id="PRO_0000410492" description="Mono(ADP-ribosyl)transferase SpvB">
    <location>
        <begin position="1"/>
        <end position="591"/>
    </location>
</feature>
<feature type="domain" description="TR mART core" evidence="2">
    <location>
        <begin position="373"/>
        <end position="576"/>
    </location>
</feature>
<feature type="active site" evidence="2">
    <location>
        <position position="471"/>
    </location>
</feature>
<feature type="active site" evidence="2">
    <location>
        <position position="501"/>
    </location>
</feature>
<feature type="active site" evidence="2">
    <location>
        <position position="538"/>
    </location>
</feature>
<accession>D0ZHS9</accession>
<dbReference type="EC" id="2.4.2.31"/>
<dbReference type="EMBL" id="CP001362">
    <property type="protein sequence ID" value="ACY86472.1"/>
    <property type="molecule type" value="Genomic_DNA"/>
</dbReference>
<dbReference type="RefSeq" id="WP_001676648.1">
    <property type="nucleotide sequence ID" value="NC_016855.1"/>
</dbReference>
<dbReference type="SMR" id="D0ZHS9"/>
<dbReference type="KEGG" id="seo:STM14_5562"/>
<dbReference type="PATRIC" id="fig|588858.6.peg.50"/>
<dbReference type="HOGENOM" id="CLU_458478_0_0_6"/>
<dbReference type="BioCyc" id="SENT588858:STM14_RS00195-MONOMER"/>
<dbReference type="PHI-base" id="PHI:3760"/>
<dbReference type="PHI-base" id="PHI:9964"/>
<dbReference type="Proteomes" id="UP000002695">
    <property type="component" value="Plasmid"/>
</dbReference>
<dbReference type="GO" id="GO:0005737">
    <property type="term" value="C:cytoplasm"/>
    <property type="evidence" value="ECO:0007669"/>
    <property type="project" value="InterPro"/>
</dbReference>
<dbReference type="GO" id="GO:0005576">
    <property type="term" value="C:extracellular region"/>
    <property type="evidence" value="ECO:0007669"/>
    <property type="project" value="UniProtKB-SubCell"/>
</dbReference>
<dbReference type="GO" id="GO:0106274">
    <property type="term" value="F:NAD+-protein-arginine ADP-ribosyltransferase activity"/>
    <property type="evidence" value="ECO:0007669"/>
    <property type="project" value="UniProtKB-EC"/>
</dbReference>
<dbReference type="GO" id="GO:0000166">
    <property type="term" value="F:nucleotide binding"/>
    <property type="evidence" value="ECO:0007669"/>
    <property type="project" value="UniProtKB-KW"/>
</dbReference>
<dbReference type="GO" id="GO:0016779">
    <property type="term" value="F:nucleotidyltransferase activity"/>
    <property type="evidence" value="ECO:0007669"/>
    <property type="project" value="UniProtKB-KW"/>
</dbReference>
<dbReference type="GO" id="GO:0090729">
    <property type="term" value="F:toxin activity"/>
    <property type="evidence" value="ECO:0007669"/>
    <property type="project" value="UniProtKB-KW"/>
</dbReference>
<dbReference type="Gene3D" id="3.90.176.10">
    <property type="entry name" value="Toxin ADP-ribosyltransferase, Chain A, domain 1"/>
    <property type="match status" value="1"/>
</dbReference>
<dbReference type="InterPro" id="IPR003540">
    <property type="entry name" value="ADP-ribosyltransferase"/>
</dbReference>
<dbReference type="InterPro" id="IPR003284">
    <property type="entry name" value="Sal_SpvB"/>
</dbReference>
<dbReference type="NCBIfam" id="NF011780">
    <property type="entry name" value="PRK15244.1"/>
    <property type="match status" value="1"/>
</dbReference>
<dbReference type="Pfam" id="PF03496">
    <property type="entry name" value="ADPrib_exo_Tox"/>
    <property type="match status" value="1"/>
</dbReference>
<dbReference type="Pfam" id="PF03534">
    <property type="entry name" value="SpvB"/>
    <property type="match status" value="1"/>
</dbReference>
<dbReference type="PRINTS" id="PR01341">
    <property type="entry name" value="SALSPVBPROT"/>
</dbReference>
<dbReference type="SUPFAM" id="SSF56399">
    <property type="entry name" value="ADP-ribosylation"/>
    <property type="match status" value="1"/>
</dbReference>
<dbReference type="PROSITE" id="PS51996">
    <property type="entry name" value="TR_MART"/>
    <property type="match status" value="1"/>
</dbReference>
<reference key="1">
    <citation type="journal article" date="2010" name="J. Bacteriol.">
        <title>Short-term signatures of evolutionary change in the Salmonella enterica serovar typhimurium 14028 genome.</title>
        <authorList>
            <person name="Jarvik T."/>
            <person name="Smillie C."/>
            <person name="Groisman E.A."/>
            <person name="Ochman H."/>
        </authorList>
    </citation>
    <scope>NUCLEOTIDE SEQUENCE [LARGE SCALE GENOMIC DNA]</scope>
    <source>
        <strain>14028s / SGSC 2262</strain>
    </source>
</reference>
<reference key="2">
    <citation type="journal article" date="2002" name="Infect. Immun.">
        <title>Genetic requirements for Salmonella-induced cytopathology in human monocyte-derived macrophages.</title>
        <authorList>
            <person name="Browne S.H."/>
            <person name="Lesnick M.L."/>
            <person name="Guiney D.G."/>
        </authorList>
    </citation>
    <scope>SUBCELLULAR LOCATION UPON INFECTION OF HUMAN MACROPHAGES</scope>
    <source>
        <strain>14028s / SGSC 2262</strain>
    </source>
</reference>
<evidence type="ECO:0000250" key="1"/>
<evidence type="ECO:0000255" key="2">
    <source>
        <dbReference type="PROSITE-ProRule" id="PRU01340"/>
    </source>
</evidence>
<evidence type="ECO:0000269" key="3">
    <source>
    </source>
</evidence>
<evidence type="ECO:0000305" key="4"/>
<gene>
    <name type="primary">spvB</name>
    <name type="ordered locus">STM14_5562</name>
</gene>